<keyword id="KW-0488">Methylation</keyword>
<keyword id="KW-0687">Ribonucleoprotein</keyword>
<keyword id="KW-0689">Ribosomal protein</keyword>
<keyword id="KW-0694">RNA-binding</keyword>
<keyword id="KW-0699">rRNA-binding</keyword>
<keyword id="KW-0820">tRNA-binding</keyword>
<accession>B9IZI9</accession>
<sequence length="140" mass="15446">MPTINQLVRNGRTDKVWKSKSPALNKGFNSLKKKSTDISAPQKRGVCTRVGTMTPKKPNSALRKYARVRLTNGIEVTAYIPGIGHNLQEHSVVLIRGGRVKDLPGVRYHIVRGALDTAGVDKRMQGRSKYGTKKPKAAKK</sequence>
<name>RS12_BACCQ</name>
<feature type="chain" id="PRO_1000134615" description="Small ribosomal subunit protein uS12">
    <location>
        <begin position="1"/>
        <end position="140"/>
    </location>
</feature>
<feature type="modified residue" description="3-methylthioaspartic acid" evidence="1">
    <location>
        <position position="102"/>
    </location>
</feature>
<reference key="1">
    <citation type="journal article" date="2009" name="J. Bacteriol.">
        <title>Complete genome sequence of the extremophilic Bacillus cereus strain Q1 with industrial applications.</title>
        <authorList>
            <person name="Xiong Z."/>
            <person name="Jiang Y."/>
            <person name="Qi D."/>
            <person name="Lu H."/>
            <person name="Yang F."/>
            <person name="Yang J."/>
            <person name="Chen L."/>
            <person name="Sun L."/>
            <person name="Xu X."/>
            <person name="Xue Y."/>
            <person name="Zhu Y."/>
            <person name="Jin Q."/>
        </authorList>
    </citation>
    <scope>NUCLEOTIDE SEQUENCE [LARGE SCALE GENOMIC DNA]</scope>
    <source>
        <strain>Q1</strain>
    </source>
</reference>
<protein>
    <recommendedName>
        <fullName evidence="2">Small ribosomal subunit protein uS12</fullName>
    </recommendedName>
    <alternativeName>
        <fullName evidence="3">30S ribosomal protein S12</fullName>
    </alternativeName>
</protein>
<dbReference type="EMBL" id="CP000227">
    <property type="protein sequence ID" value="ACM10633.1"/>
    <property type="molecule type" value="Genomic_DNA"/>
</dbReference>
<dbReference type="SMR" id="B9IZI9"/>
<dbReference type="KEGG" id="bcq:BCQ_0118"/>
<dbReference type="HOGENOM" id="CLU_104295_1_2_9"/>
<dbReference type="Proteomes" id="UP000000441">
    <property type="component" value="Chromosome"/>
</dbReference>
<dbReference type="GO" id="GO:0015935">
    <property type="term" value="C:small ribosomal subunit"/>
    <property type="evidence" value="ECO:0007669"/>
    <property type="project" value="InterPro"/>
</dbReference>
<dbReference type="GO" id="GO:0019843">
    <property type="term" value="F:rRNA binding"/>
    <property type="evidence" value="ECO:0007669"/>
    <property type="project" value="UniProtKB-UniRule"/>
</dbReference>
<dbReference type="GO" id="GO:0003735">
    <property type="term" value="F:structural constituent of ribosome"/>
    <property type="evidence" value="ECO:0007669"/>
    <property type="project" value="InterPro"/>
</dbReference>
<dbReference type="GO" id="GO:0000049">
    <property type="term" value="F:tRNA binding"/>
    <property type="evidence" value="ECO:0007669"/>
    <property type="project" value="UniProtKB-UniRule"/>
</dbReference>
<dbReference type="GO" id="GO:0006412">
    <property type="term" value="P:translation"/>
    <property type="evidence" value="ECO:0007669"/>
    <property type="project" value="UniProtKB-UniRule"/>
</dbReference>
<dbReference type="CDD" id="cd03368">
    <property type="entry name" value="Ribosomal_S12"/>
    <property type="match status" value="1"/>
</dbReference>
<dbReference type="FunFam" id="2.40.50.140:FF:000001">
    <property type="entry name" value="30S ribosomal protein S12"/>
    <property type="match status" value="1"/>
</dbReference>
<dbReference type="Gene3D" id="2.40.50.140">
    <property type="entry name" value="Nucleic acid-binding proteins"/>
    <property type="match status" value="1"/>
</dbReference>
<dbReference type="HAMAP" id="MF_00403_B">
    <property type="entry name" value="Ribosomal_uS12_B"/>
    <property type="match status" value="1"/>
</dbReference>
<dbReference type="InterPro" id="IPR012340">
    <property type="entry name" value="NA-bd_OB-fold"/>
</dbReference>
<dbReference type="InterPro" id="IPR006032">
    <property type="entry name" value="Ribosomal_uS12"/>
</dbReference>
<dbReference type="InterPro" id="IPR005679">
    <property type="entry name" value="Ribosomal_uS12_bac"/>
</dbReference>
<dbReference type="NCBIfam" id="TIGR00981">
    <property type="entry name" value="rpsL_bact"/>
    <property type="match status" value="1"/>
</dbReference>
<dbReference type="PANTHER" id="PTHR11652">
    <property type="entry name" value="30S RIBOSOMAL PROTEIN S12 FAMILY MEMBER"/>
    <property type="match status" value="1"/>
</dbReference>
<dbReference type="Pfam" id="PF00164">
    <property type="entry name" value="Ribosom_S12_S23"/>
    <property type="match status" value="1"/>
</dbReference>
<dbReference type="PRINTS" id="PR01034">
    <property type="entry name" value="RIBOSOMALS12"/>
</dbReference>
<dbReference type="SUPFAM" id="SSF50249">
    <property type="entry name" value="Nucleic acid-binding proteins"/>
    <property type="match status" value="1"/>
</dbReference>
<dbReference type="PROSITE" id="PS00055">
    <property type="entry name" value="RIBOSOMAL_S12"/>
    <property type="match status" value="1"/>
</dbReference>
<evidence type="ECO:0000250" key="1"/>
<evidence type="ECO:0000255" key="2">
    <source>
        <dbReference type="HAMAP-Rule" id="MF_00403"/>
    </source>
</evidence>
<evidence type="ECO:0000305" key="3"/>
<proteinExistence type="inferred from homology"/>
<organism>
    <name type="scientific">Bacillus cereus (strain Q1)</name>
    <dbReference type="NCBI Taxonomy" id="361100"/>
    <lineage>
        <taxon>Bacteria</taxon>
        <taxon>Bacillati</taxon>
        <taxon>Bacillota</taxon>
        <taxon>Bacilli</taxon>
        <taxon>Bacillales</taxon>
        <taxon>Bacillaceae</taxon>
        <taxon>Bacillus</taxon>
        <taxon>Bacillus cereus group</taxon>
    </lineage>
</organism>
<gene>
    <name evidence="2" type="primary">rpsL</name>
    <name type="ordered locus">BCQ_0118</name>
</gene>
<comment type="function">
    <text evidence="2">With S4 and S5 plays an important role in translational accuracy.</text>
</comment>
<comment type="function">
    <text evidence="2">Interacts with and stabilizes bases of the 16S rRNA that are involved in tRNA selection in the A site and with the mRNA backbone. Located at the interface of the 30S and 50S subunits, it traverses the body of the 30S subunit contacting proteins on the other side and probably holding the rRNA structure together. The combined cluster of proteins S8, S12 and S17 appears to hold together the shoulder and platform of the 30S subunit.</text>
</comment>
<comment type="subunit">
    <text evidence="2">Part of the 30S ribosomal subunit. Contacts proteins S8 and S17. May interact with IF1 in the 30S initiation complex.</text>
</comment>
<comment type="similarity">
    <text evidence="2">Belongs to the universal ribosomal protein uS12 family.</text>
</comment>